<gene>
    <name evidence="1" type="primary">argC</name>
    <name type="ordered locus">BT9727_3879</name>
</gene>
<accession>Q6HE28</accession>
<proteinExistence type="inferred from homology"/>
<feature type="chain" id="PRO_0000112381" description="N-acetyl-gamma-glutamyl-phosphate reductase">
    <location>
        <begin position="1"/>
        <end position="345"/>
    </location>
</feature>
<feature type="active site" evidence="1">
    <location>
        <position position="149"/>
    </location>
</feature>
<comment type="function">
    <text evidence="1">Catalyzes the NADPH-dependent reduction of N-acetyl-5-glutamyl phosphate to yield N-acetyl-L-glutamate 5-semialdehyde.</text>
</comment>
<comment type="catalytic activity">
    <reaction evidence="1">
        <text>N-acetyl-L-glutamate 5-semialdehyde + phosphate + NADP(+) = N-acetyl-L-glutamyl 5-phosphate + NADPH + H(+)</text>
        <dbReference type="Rhea" id="RHEA:21588"/>
        <dbReference type="ChEBI" id="CHEBI:15378"/>
        <dbReference type="ChEBI" id="CHEBI:29123"/>
        <dbReference type="ChEBI" id="CHEBI:43474"/>
        <dbReference type="ChEBI" id="CHEBI:57783"/>
        <dbReference type="ChEBI" id="CHEBI:57936"/>
        <dbReference type="ChEBI" id="CHEBI:58349"/>
        <dbReference type="EC" id="1.2.1.38"/>
    </reaction>
</comment>
<comment type="pathway">
    <text evidence="1">Amino-acid biosynthesis; L-arginine biosynthesis; N(2)-acetyl-L-ornithine from L-glutamate: step 3/4.</text>
</comment>
<comment type="subcellular location">
    <subcellularLocation>
        <location evidence="1">Cytoplasm</location>
    </subcellularLocation>
</comment>
<comment type="similarity">
    <text evidence="1">Belongs to the NAGSA dehydrogenase family. Type 1 subfamily.</text>
</comment>
<organism>
    <name type="scientific">Bacillus thuringiensis subsp. konkukian (strain 97-27)</name>
    <dbReference type="NCBI Taxonomy" id="281309"/>
    <lineage>
        <taxon>Bacteria</taxon>
        <taxon>Bacillati</taxon>
        <taxon>Bacillota</taxon>
        <taxon>Bacilli</taxon>
        <taxon>Bacillales</taxon>
        <taxon>Bacillaceae</taxon>
        <taxon>Bacillus</taxon>
        <taxon>Bacillus cereus group</taxon>
    </lineage>
</organism>
<reference key="1">
    <citation type="journal article" date="2006" name="J. Bacteriol.">
        <title>Pathogenomic sequence analysis of Bacillus cereus and Bacillus thuringiensis isolates closely related to Bacillus anthracis.</title>
        <authorList>
            <person name="Han C.S."/>
            <person name="Xie G."/>
            <person name="Challacombe J.F."/>
            <person name="Altherr M.R."/>
            <person name="Bhotika S.S."/>
            <person name="Bruce D."/>
            <person name="Campbell C.S."/>
            <person name="Campbell M.L."/>
            <person name="Chen J."/>
            <person name="Chertkov O."/>
            <person name="Cleland C."/>
            <person name="Dimitrijevic M."/>
            <person name="Doggett N.A."/>
            <person name="Fawcett J.J."/>
            <person name="Glavina T."/>
            <person name="Goodwin L.A."/>
            <person name="Hill K.K."/>
            <person name="Hitchcock P."/>
            <person name="Jackson P.J."/>
            <person name="Keim P."/>
            <person name="Kewalramani A.R."/>
            <person name="Longmire J."/>
            <person name="Lucas S."/>
            <person name="Malfatti S."/>
            <person name="McMurry K."/>
            <person name="Meincke L.J."/>
            <person name="Misra M."/>
            <person name="Moseman B.L."/>
            <person name="Mundt M."/>
            <person name="Munk A.C."/>
            <person name="Okinaka R.T."/>
            <person name="Parson-Quintana B."/>
            <person name="Reilly L.P."/>
            <person name="Richardson P."/>
            <person name="Robinson D.L."/>
            <person name="Rubin E."/>
            <person name="Saunders E."/>
            <person name="Tapia R."/>
            <person name="Tesmer J.G."/>
            <person name="Thayer N."/>
            <person name="Thompson L.S."/>
            <person name="Tice H."/>
            <person name="Ticknor L.O."/>
            <person name="Wills P.L."/>
            <person name="Brettin T.S."/>
            <person name="Gilna P."/>
        </authorList>
    </citation>
    <scope>NUCLEOTIDE SEQUENCE [LARGE SCALE GENOMIC DNA]</scope>
    <source>
        <strain>97-27</strain>
    </source>
</reference>
<protein>
    <recommendedName>
        <fullName evidence="1">N-acetyl-gamma-glutamyl-phosphate reductase</fullName>
        <shortName evidence="1">AGPR</shortName>
        <ecNumber evidence="1">1.2.1.38</ecNumber>
    </recommendedName>
    <alternativeName>
        <fullName evidence="1">N-acetyl-glutamate semialdehyde dehydrogenase</fullName>
        <shortName evidence="1">NAGSA dehydrogenase</shortName>
    </alternativeName>
</protein>
<keyword id="KW-0028">Amino-acid biosynthesis</keyword>
<keyword id="KW-0055">Arginine biosynthesis</keyword>
<keyword id="KW-0963">Cytoplasm</keyword>
<keyword id="KW-0521">NADP</keyword>
<keyword id="KW-0560">Oxidoreductase</keyword>
<sequence length="345" mass="38681">MKVAIIGATGYGGIELIRLLEQHPYFSIASLHSFSQVGECITNVYPHFQNVLVHTLQEIDVEEIEKEAEIVFLATPAGVSAELTPKLLAVGLKVIDLSGDFRMKDPFIYEKWYKRVAAKEGVLREAVYGLSEWKRYEIQKANLIANPGCFATAALLAVLPLVRSGIIEEDSIIIDAKSGVSGAGKTPTTMTHFPELYDNLRIYKVNEHQHVPEIEQMLTEWNRETKPITFSTHLIPISRGIMVTLYAKVKREMEIEQLQQLYEKAYEQSAFVRIRMQGEFPSPKEVRGSNYCDMGIAYDERTGRVTVVSVIDNMMKGAAGQAIQNANIVAGLEETTGLQHMPLYL</sequence>
<dbReference type="EC" id="1.2.1.38" evidence="1"/>
<dbReference type="EMBL" id="AE017355">
    <property type="protein sequence ID" value="AAT60755.1"/>
    <property type="molecule type" value="Genomic_DNA"/>
</dbReference>
<dbReference type="RefSeq" id="WP_000861219.1">
    <property type="nucleotide sequence ID" value="NC_005957.1"/>
</dbReference>
<dbReference type="RefSeq" id="YP_038198.1">
    <property type="nucleotide sequence ID" value="NC_005957.1"/>
</dbReference>
<dbReference type="SMR" id="Q6HE28"/>
<dbReference type="KEGG" id="btk:BT9727_3879"/>
<dbReference type="PATRIC" id="fig|281309.8.peg.4137"/>
<dbReference type="HOGENOM" id="CLU_006384_0_1_9"/>
<dbReference type="UniPathway" id="UPA00068">
    <property type="reaction ID" value="UER00108"/>
</dbReference>
<dbReference type="Proteomes" id="UP000001301">
    <property type="component" value="Chromosome"/>
</dbReference>
<dbReference type="GO" id="GO:0005737">
    <property type="term" value="C:cytoplasm"/>
    <property type="evidence" value="ECO:0007669"/>
    <property type="project" value="UniProtKB-SubCell"/>
</dbReference>
<dbReference type="GO" id="GO:0003942">
    <property type="term" value="F:N-acetyl-gamma-glutamyl-phosphate reductase activity"/>
    <property type="evidence" value="ECO:0007669"/>
    <property type="project" value="UniProtKB-UniRule"/>
</dbReference>
<dbReference type="GO" id="GO:0051287">
    <property type="term" value="F:NAD binding"/>
    <property type="evidence" value="ECO:0007669"/>
    <property type="project" value="InterPro"/>
</dbReference>
<dbReference type="GO" id="GO:0070401">
    <property type="term" value="F:NADP+ binding"/>
    <property type="evidence" value="ECO:0007669"/>
    <property type="project" value="InterPro"/>
</dbReference>
<dbReference type="GO" id="GO:0006526">
    <property type="term" value="P:L-arginine biosynthetic process"/>
    <property type="evidence" value="ECO:0007669"/>
    <property type="project" value="UniProtKB-UniRule"/>
</dbReference>
<dbReference type="CDD" id="cd23934">
    <property type="entry name" value="AGPR_1_C"/>
    <property type="match status" value="1"/>
</dbReference>
<dbReference type="CDD" id="cd17895">
    <property type="entry name" value="AGPR_1_N"/>
    <property type="match status" value="1"/>
</dbReference>
<dbReference type="FunFam" id="3.30.360.10:FF:000014">
    <property type="entry name" value="N-acetyl-gamma-glutamyl-phosphate reductase"/>
    <property type="match status" value="1"/>
</dbReference>
<dbReference type="FunFam" id="3.40.50.720:FF:000117">
    <property type="entry name" value="N-acetyl-gamma-glutamyl-phosphate reductase"/>
    <property type="match status" value="1"/>
</dbReference>
<dbReference type="Gene3D" id="3.30.360.10">
    <property type="entry name" value="Dihydrodipicolinate Reductase, domain 2"/>
    <property type="match status" value="1"/>
</dbReference>
<dbReference type="Gene3D" id="3.40.50.720">
    <property type="entry name" value="NAD(P)-binding Rossmann-like Domain"/>
    <property type="match status" value="1"/>
</dbReference>
<dbReference type="HAMAP" id="MF_00150">
    <property type="entry name" value="ArgC_type1"/>
    <property type="match status" value="1"/>
</dbReference>
<dbReference type="InterPro" id="IPR023013">
    <property type="entry name" value="AGPR_AS"/>
</dbReference>
<dbReference type="InterPro" id="IPR000706">
    <property type="entry name" value="AGPR_type-1"/>
</dbReference>
<dbReference type="InterPro" id="IPR036291">
    <property type="entry name" value="NAD(P)-bd_dom_sf"/>
</dbReference>
<dbReference type="InterPro" id="IPR050085">
    <property type="entry name" value="NAGSA_dehydrogenase"/>
</dbReference>
<dbReference type="InterPro" id="IPR000534">
    <property type="entry name" value="Semialdehyde_DH_NAD-bd"/>
</dbReference>
<dbReference type="NCBIfam" id="TIGR01850">
    <property type="entry name" value="argC"/>
    <property type="match status" value="1"/>
</dbReference>
<dbReference type="PANTHER" id="PTHR32338:SF10">
    <property type="entry name" value="N-ACETYL-GAMMA-GLUTAMYL-PHOSPHATE REDUCTASE, CHLOROPLASTIC-RELATED"/>
    <property type="match status" value="1"/>
</dbReference>
<dbReference type="PANTHER" id="PTHR32338">
    <property type="entry name" value="N-ACETYL-GAMMA-GLUTAMYL-PHOSPHATE REDUCTASE, CHLOROPLASTIC-RELATED-RELATED"/>
    <property type="match status" value="1"/>
</dbReference>
<dbReference type="Pfam" id="PF01118">
    <property type="entry name" value="Semialdhyde_dh"/>
    <property type="match status" value="1"/>
</dbReference>
<dbReference type="Pfam" id="PF22698">
    <property type="entry name" value="Semialdhyde_dhC_1"/>
    <property type="match status" value="1"/>
</dbReference>
<dbReference type="SMART" id="SM00859">
    <property type="entry name" value="Semialdhyde_dh"/>
    <property type="match status" value="1"/>
</dbReference>
<dbReference type="SUPFAM" id="SSF55347">
    <property type="entry name" value="Glyceraldehyde-3-phosphate dehydrogenase-like, C-terminal domain"/>
    <property type="match status" value="1"/>
</dbReference>
<dbReference type="SUPFAM" id="SSF51735">
    <property type="entry name" value="NAD(P)-binding Rossmann-fold domains"/>
    <property type="match status" value="1"/>
</dbReference>
<dbReference type="PROSITE" id="PS01224">
    <property type="entry name" value="ARGC"/>
    <property type="match status" value="1"/>
</dbReference>
<evidence type="ECO:0000255" key="1">
    <source>
        <dbReference type="HAMAP-Rule" id="MF_00150"/>
    </source>
</evidence>
<name>ARGC_BACHK</name>